<sequence length="225" mass="25957">MPVKLAQALANPLFPALDSALRSGRHIGLDELDNHAFLMDFQEYLEEFYARYNVELIRAPEGFFYLRPRSTTLIPRSVLSELDMMVGKILCYLYLSPERLANEGIFTQQELYDELLTLADEAKLLKLVNNRSTGSDVDRQKLQEKVRSSLNRLRRLGMVWFMGHDSSKFRITESVFRFGADVRAGDDPREAQRRLIRDGEAMPIENHLQLNDETEESQPDSGEEE</sequence>
<dbReference type="EMBL" id="AE014075">
    <property type="protein sequence ID" value="AAN79533.1"/>
    <property type="status" value="ALT_INIT"/>
    <property type="molecule type" value="Genomic_DNA"/>
</dbReference>
<dbReference type="SMR" id="Q8FJA3"/>
<dbReference type="STRING" id="199310.c1065"/>
<dbReference type="KEGG" id="ecc:c1065"/>
<dbReference type="eggNOG" id="COG3095">
    <property type="taxonomic scope" value="Bacteria"/>
</dbReference>
<dbReference type="HOGENOM" id="CLU_1146408_0_0_6"/>
<dbReference type="Proteomes" id="UP000001410">
    <property type="component" value="Chromosome"/>
</dbReference>
<dbReference type="GO" id="GO:0005737">
    <property type="term" value="C:cytoplasm"/>
    <property type="evidence" value="ECO:0007669"/>
    <property type="project" value="UniProtKB-UniRule"/>
</dbReference>
<dbReference type="GO" id="GO:0009295">
    <property type="term" value="C:nucleoid"/>
    <property type="evidence" value="ECO:0007669"/>
    <property type="project" value="UniProtKB-SubCell"/>
</dbReference>
<dbReference type="GO" id="GO:0051301">
    <property type="term" value="P:cell division"/>
    <property type="evidence" value="ECO:0007669"/>
    <property type="project" value="UniProtKB-KW"/>
</dbReference>
<dbReference type="GO" id="GO:0030261">
    <property type="term" value="P:chromosome condensation"/>
    <property type="evidence" value="ECO:0007669"/>
    <property type="project" value="UniProtKB-KW"/>
</dbReference>
<dbReference type="GO" id="GO:0007059">
    <property type="term" value="P:chromosome segregation"/>
    <property type="evidence" value="ECO:0007669"/>
    <property type="project" value="UniProtKB-UniRule"/>
</dbReference>
<dbReference type="GO" id="GO:0006260">
    <property type="term" value="P:DNA replication"/>
    <property type="evidence" value="ECO:0007669"/>
    <property type="project" value="UniProtKB-UniRule"/>
</dbReference>
<dbReference type="CDD" id="cd16336">
    <property type="entry name" value="MukE"/>
    <property type="match status" value="1"/>
</dbReference>
<dbReference type="Gene3D" id="1.10.10.2250">
    <property type="match status" value="1"/>
</dbReference>
<dbReference type="Gene3D" id="1.10.10.2260">
    <property type="entry name" value="MukE-like family, C-terminal domain"/>
    <property type="match status" value="1"/>
</dbReference>
<dbReference type="HAMAP" id="MF_01802">
    <property type="entry name" value="MukE"/>
    <property type="match status" value="1"/>
</dbReference>
<dbReference type="InterPro" id="IPR042037">
    <property type="entry name" value="MukE_C"/>
</dbReference>
<dbReference type="InterPro" id="IPR042038">
    <property type="entry name" value="MukE_N"/>
</dbReference>
<dbReference type="InterPro" id="IPR007385">
    <property type="entry name" value="Scp_MukE"/>
</dbReference>
<dbReference type="NCBIfam" id="NF003602">
    <property type="entry name" value="PRK05256.1"/>
    <property type="match status" value="1"/>
</dbReference>
<dbReference type="Pfam" id="PF04288">
    <property type="entry name" value="MukE"/>
    <property type="match status" value="1"/>
</dbReference>
<reference key="1">
    <citation type="journal article" date="2002" name="Proc. Natl. Acad. Sci. U.S.A.">
        <title>Extensive mosaic structure revealed by the complete genome sequence of uropathogenic Escherichia coli.</title>
        <authorList>
            <person name="Welch R.A."/>
            <person name="Burland V."/>
            <person name="Plunkett G. III"/>
            <person name="Redford P."/>
            <person name="Roesch P."/>
            <person name="Rasko D."/>
            <person name="Buckles E.L."/>
            <person name="Liou S.-R."/>
            <person name="Boutin A."/>
            <person name="Hackett J."/>
            <person name="Stroud D."/>
            <person name="Mayhew G.F."/>
            <person name="Rose D.J."/>
            <person name="Zhou S."/>
            <person name="Schwartz D.C."/>
            <person name="Perna N.T."/>
            <person name="Mobley H.L.T."/>
            <person name="Donnenberg M.S."/>
            <person name="Blattner F.R."/>
        </authorList>
    </citation>
    <scope>NUCLEOTIDE SEQUENCE [LARGE SCALE GENOMIC DNA]</scope>
    <source>
        <strain>CFT073 / ATCC 700928 / UPEC</strain>
    </source>
</reference>
<protein>
    <recommendedName>
        <fullName evidence="1">Chromosome partition protein MukE</fullName>
    </recommendedName>
</protein>
<accession>Q8FJA3</accession>
<evidence type="ECO:0000255" key="1">
    <source>
        <dbReference type="HAMAP-Rule" id="MF_01802"/>
    </source>
</evidence>
<evidence type="ECO:0000256" key="2">
    <source>
        <dbReference type="SAM" id="MobiDB-lite"/>
    </source>
</evidence>
<evidence type="ECO:0000305" key="3"/>
<proteinExistence type="inferred from homology"/>
<gene>
    <name evidence="1" type="primary">mukE</name>
    <name type="ordered locus">c1065</name>
</gene>
<feature type="chain" id="PRO_0000206793" description="Chromosome partition protein MukE">
    <location>
        <begin position="1"/>
        <end position="225"/>
    </location>
</feature>
<feature type="region of interest" description="Disordered" evidence="2">
    <location>
        <begin position="197"/>
        <end position="225"/>
    </location>
</feature>
<feature type="compositionally biased region" description="Acidic residues" evidence="2">
    <location>
        <begin position="212"/>
        <end position="225"/>
    </location>
</feature>
<name>MUKE_ECOL6</name>
<organism>
    <name type="scientific">Escherichia coli O6:H1 (strain CFT073 / ATCC 700928 / UPEC)</name>
    <dbReference type="NCBI Taxonomy" id="199310"/>
    <lineage>
        <taxon>Bacteria</taxon>
        <taxon>Pseudomonadati</taxon>
        <taxon>Pseudomonadota</taxon>
        <taxon>Gammaproteobacteria</taxon>
        <taxon>Enterobacterales</taxon>
        <taxon>Enterobacteriaceae</taxon>
        <taxon>Escherichia</taxon>
    </lineage>
</organism>
<keyword id="KW-0131">Cell cycle</keyword>
<keyword id="KW-0132">Cell division</keyword>
<keyword id="KW-0159">Chromosome partition</keyword>
<keyword id="KW-0963">Cytoplasm</keyword>
<keyword id="KW-0226">DNA condensation</keyword>
<keyword id="KW-1185">Reference proteome</keyword>
<comment type="function">
    <text evidence="1">Involved in chromosome condensation, segregation and cell cycle progression. May participate in facilitating chromosome segregation by condensation DNA from both sides of a centrally located replisome during cell division. Probably acts via its interaction with MukB and MukF.</text>
</comment>
<comment type="subunit">
    <text evidence="1">Interacts, and probably forms a ternary complex, with MukF and MukB. The complex formation is stimulated by calcium or magnesium.</text>
</comment>
<comment type="subcellular location">
    <subcellularLocation>
        <location evidence="1">Cytoplasm</location>
        <location evidence="1">Nucleoid</location>
    </subcellularLocation>
    <text evidence="1">Restricted to the nucleoid region.</text>
</comment>
<comment type="similarity">
    <text evidence="1">Belongs to the MukE family.</text>
</comment>
<comment type="sequence caution" evidence="3">
    <conflict type="erroneous initiation">
        <sequence resource="EMBL-CDS" id="AAN79533"/>
    </conflict>
</comment>